<proteinExistence type="inferred from homology"/>
<comment type="function">
    <text evidence="6">Endoplasmic reticulum co-chaperone required for the of virulence factors such as PG1, the major endopolygalacturonase produced during the infection of tomato plants.</text>
</comment>
<comment type="subcellular location">
    <subcellularLocation>
        <location evidence="1">Endoplasmic reticulum lumen</location>
    </subcellularLocation>
</comment>
<comment type="domain">
    <text evidence="1">The TPR repeats mediate interaction with unfolded polypeptides and the J-domain is essential to stimulate the ATPase activity of the chaperone and to increase its substrate affinity during the folding cycle.</text>
</comment>
<comment type="disruption phenotype">
    <text evidence="6">Shows increased sensitivity to the N-glycosylation inhibitor tunicamycin and leads to a significant attenuation of the virulence on tomato plants (PubMed:26487566). Accumulates significantly less fungal biomass in infected plants and leads to significant decrease in secretion of PG1, the major endopolygalacturonase produced during the infection of tomato plants (PubMed:26487566).</text>
</comment>
<gene>
    <name evidence="7" type="primary">DNJ1</name>
    <name type="ORF">FOXG_08159</name>
</gene>
<sequence length="521" mass="56992">MHLNLAGLAVAATAFLATASALSPQDIPADLPVSNLLTKAQTHLSRGETNEALVYYDAAIARDPTNYLSLFKRATAYLSLGRTSQATEDFNKVLSLKPGFEGAHLQLARLRAKAGDWDAAKAQYGLAGKAPKSAEFVELEEAKLAAHLADMASKGGKWEECVSHAGTAIVVASRSPHLRELRAHCRFELGDVELALSDLQHVLHMKPGDTSPHIVISATSFYALGDLENGIGQVKKCLQSDPDSKICKKLHKQEKKVEKAYKKIQGQLSRGQPTTAGRALVGTADDSGLVPDVRKQVEELKKNKSIPKTARIQLLENLIEMTCQAYTESSHKEAAKYCDESLQLNPDSFWGLLHKGKAQLKSELYDAAIATLEKAAEIRPDQKEKVNPILNKAHIALKRSKTKDYYKVLGVENDADERQIKSAYRKQSKIFHPDKAAKQGIPKEEAEKKMASINEAYEVLSDPELRARFDRGDDPNSQERPNPFQGQGNPFGGGHPFMFQQGGGGGGPNIKFQFGGQPFGF</sequence>
<name>DNJ1_FUSO4</name>
<accession>A0A0D2XVZ5</accession>
<reference key="1">
    <citation type="journal article" date="2010" name="Nature">
        <title>Comparative genomics reveals mobile pathogenicity chromosomes in Fusarium.</title>
        <authorList>
            <person name="Ma L.-J."/>
            <person name="van der Does H.C."/>
            <person name="Borkovich K.A."/>
            <person name="Coleman J.J."/>
            <person name="Daboussi M.-J."/>
            <person name="Di Pietro A."/>
            <person name="Dufresne M."/>
            <person name="Freitag M."/>
            <person name="Grabherr M."/>
            <person name="Henrissat B."/>
            <person name="Houterman P.M."/>
            <person name="Kang S."/>
            <person name="Shim W.-B."/>
            <person name="Woloshuk C."/>
            <person name="Xie X."/>
            <person name="Xu J.-R."/>
            <person name="Antoniw J."/>
            <person name="Baker S.E."/>
            <person name="Bluhm B.H."/>
            <person name="Breakspear A."/>
            <person name="Brown D.W."/>
            <person name="Butchko R.A.E."/>
            <person name="Chapman S."/>
            <person name="Coulson R."/>
            <person name="Coutinho P.M."/>
            <person name="Danchin E.G.J."/>
            <person name="Diener A."/>
            <person name="Gale L.R."/>
            <person name="Gardiner D.M."/>
            <person name="Goff S."/>
            <person name="Hammond-Kosack K.E."/>
            <person name="Hilburn K."/>
            <person name="Hua-Van A."/>
            <person name="Jonkers W."/>
            <person name="Kazan K."/>
            <person name="Kodira C.D."/>
            <person name="Koehrsen M."/>
            <person name="Kumar L."/>
            <person name="Lee Y.-H."/>
            <person name="Li L."/>
            <person name="Manners J.M."/>
            <person name="Miranda-Saavedra D."/>
            <person name="Mukherjee M."/>
            <person name="Park G."/>
            <person name="Park J."/>
            <person name="Park S.-Y."/>
            <person name="Proctor R.H."/>
            <person name="Regev A."/>
            <person name="Ruiz-Roldan M.C."/>
            <person name="Sain D."/>
            <person name="Sakthikumar S."/>
            <person name="Sykes S."/>
            <person name="Schwartz D.C."/>
            <person name="Turgeon B.G."/>
            <person name="Wapinski I."/>
            <person name="Yoder O."/>
            <person name="Young S."/>
            <person name="Zeng Q."/>
            <person name="Zhou S."/>
            <person name="Galagan J."/>
            <person name="Cuomo C.A."/>
            <person name="Kistler H.C."/>
            <person name="Rep M."/>
        </authorList>
    </citation>
    <scope>NUCLEOTIDE SEQUENCE [LARGE SCALE GENOMIC DNA]</scope>
    <source>
        <strain>4287 / CBS 123668 / FGSC 9935 / NRRL 34936</strain>
    </source>
</reference>
<reference key="2">
    <citation type="journal article" date="2016" name="New Phytol.">
        <title>A conserved co-chaperone is required for virulence in fungal plant pathogens.</title>
        <authorList>
            <person name="Lo Presti L."/>
            <person name="Lopez Diaz C."/>
            <person name="Turra D."/>
            <person name="Di Pietro A."/>
            <person name="Hampel M."/>
            <person name="Heimel K."/>
            <person name="Kahmann R."/>
        </authorList>
    </citation>
    <scope>FUNCTION</scope>
    <scope>DISRUPTION PHENOTYPE</scope>
</reference>
<keyword id="KW-0256">Endoplasmic reticulum</keyword>
<keyword id="KW-1185">Reference proteome</keyword>
<keyword id="KW-0677">Repeat</keyword>
<keyword id="KW-0732">Signal</keyword>
<keyword id="KW-0802">TPR repeat</keyword>
<keyword id="KW-0843">Virulence</keyword>
<protein>
    <recommendedName>
        <fullName evidence="7">Tetratricopeptide repeat and J domain-containing co-chaperone DNJ1</fullName>
    </recommendedName>
</protein>
<evidence type="ECO:0000250" key="1">
    <source>
        <dbReference type="UniProtKB" id="A0A0D1E2P6"/>
    </source>
</evidence>
<evidence type="ECO:0000255" key="2"/>
<evidence type="ECO:0000255" key="3">
    <source>
        <dbReference type="PROSITE-ProRule" id="PRU00286"/>
    </source>
</evidence>
<evidence type="ECO:0000255" key="4">
    <source>
        <dbReference type="PROSITE-ProRule" id="PRU00339"/>
    </source>
</evidence>
<evidence type="ECO:0000256" key="5">
    <source>
        <dbReference type="SAM" id="MobiDB-lite"/>
    </source>
</evidence>
<evidence type="ECO:0000269" key="6">
    <source>
    </source>
</evidence>
<evidence type="ECO:0000303" key="7">
    <source>
    </source>
</evidence>
<dbReference type="EMBL" id="DS231703">
    <property type="protein sequence ID" value="KNB06105.1"/>
    <property type="molecule type" value="Genomic_DNA"/>
</dbReference>
<dbReference type="RefSeq" id="XP_018244150.1">
    <property type="nucleotide sequence ID" value="XM_018386940.1"/>
</dbReference>
<dbReference type="SMR" id="A0A0D2XVZ5"/>
<dbReference type="STRING" id="426428.A0A0D2XVZ5"/>
<dbReference type="EnsemblFungi" id="FOXG_08159T0">
    <property type="protein sequence ID" value="FOXG_08159P0"/>
    <property type="gene ID" value="FOXG_08159"/>
</dbReference>
<dbReference type="GeneID" id="28949807"/>
<dbReference type="KEGG" id="fox:FOXG_08159"/>
<dbReference type="VEuPathDB" id="FungiDB:FOXG_08159"/>
<dbReference type="OMA" id="PFAHFQH"/>
<dbReference type="OrthoDB" id="125089at110618"/>
<dbReference type="PHI-base" id="PHI:5236"/>
<dbReference type="Proteomes" id="UP000009097">
    <property type="component" value="Unassembled WGS sequence"/>
</dbReference>
<dbReference type="GO" id="GO:0005788">
    <property type="term" value="C:endoplasmic reticulum lumen"/>
    <property type="evidence" value="ECO:0007669"/>
    <property type="project" value="UniProtKB-SubCell"/>
</dbReference>
<dbReference type="GO" id="GO:0051787">
    <property type="term" value="F:misfolded protein binding"/>
    <property type="evidence" value="ECO:0007669"/>
    <property type="project" value="TreeGrafter"/>
</dbReference>
<dbReference type="GO" id="GO:0051087">
    <property type="term" value="F:protein-folding chaperone binding"/>
    <property type="evidence" value="ECO:0007669"/>
    <property type="project" value="TreeGrafter"/>
</dbReference>
<dbReference type="GO" id="GO:0034975">
    <property type="term" value="P:protein folding in endoplasmic reticulum"/>
    <property type="evidence" value="ECO:0007669"/>
    <property type="project" value="TreeGrafter"/>
</dbReference>
<dbReference type="CDD" id="cd06257">
    <property type="entry name" value="DnaJ"/>
    <property type="match status" value="1"/>
</dbReference>
<dbReference type="FunFam" id="1.10.287.110:FF:000083">
    <property type="entry name" value="DnaJ and TPR domain protein"/>
    <property type="match status" value="1"/>
</dbReference>
<dbReference type="FunFam" id="1.25.40.10:FF:000224">
    <property type="entry name" value="DnaJ and TPR domain protein"/>
    <property type="match status" value="1"/>
</dbReference>
<dbReference type="Gene3D" id="1.10.287.110">
    <property type="entry name" value="DnaJ domain"/>
    <property type="match status" value="1"/>
</dbReference>
<dbReference type="Gene3D" id="1.25.40.10">
    <property type="entry name" value="Tetratricopeptide repeat domain"/>
    <property type="match status" value="1"/>
</dbReference>
<dbReference type="InterPro" id="IPR051727">
    <property type="entry name" value="DnaJ_C3_Co-chaperones"/>
</dbReference>
<dbReference type="InterPro" id="IPR001623">
    <property type="entry name" value="DnaJ_domain"/>
</dbReference>
<dbReference type="InterPro" id="IPR036869">
    <property type="entry name" value="J_dom_sf"/>
</dbReference>
<dbReference type="InterPro" id="IPR011990">
    <property type="entry name" value="TPR-like_helical_dom_sf"/>
</dbReference>
<dbReference type="InterPro" id="IPR019734">
    <property type="entry name" value="TPR_rpt"/>
</dbReference>
<dbReference type="PANTHER" id="PTHR44140">
    <property type="entry name" value="LD25575P"/>
    <property type="match status" value="1"/>
</dbReference>
<dbReference type="PANTHER" id="PTHR44140:SF2">
    <property type="entry name" value="LD25575P"/>
    <property type="match status" value="1"/>
</dbReference>
<dbReference type="Pfam" id="PF00226">
    <property type="entry name" value="DnaJ"/>
    <property type="match status" value="1"/>
</dbReference>
<dbReference type="Pfam" id="PF13431">
    <property type="entry name" value="TPR_17"/>
    <property type="match status" value="1"/>
</dbReference>
<dbReference type="Pfam" id="PF14559">
    <property type="entry name" value="TPR_19"/>
    <property type="match status" value="1"/>
</dbReference>
<dbReference type="PRINTS" id="PR00625">
    <property type="entry name" value="JDOMAIN"/>
</dbReference>
<dbReference type="SMART" id="SM00271">
    <property type="entry name" value="DnaJ"/>
    <property type="match status" value="1"/>
</dbReference>
<dbReference type="SMART" id="SM00028">
    <property type="entry name" value="TPR"/>
    <property type="match status" value="6"/>
</dbReference>
<dbReference type="SUPFAM" id="SSF46565">
    <property type="entry name" value="Chaperone J-domain"/>
    <property type="match status" value="1"/>
</dbReference>
<dbReference type="SUPFAM" id="SSF48452">
    <property type="entry name" value="TPR-like"/>
    <property type="match status" value="1"/>
</dbReference>
<dbReference type="PROSITE" id="PS50076">
    <property type="entry name" value="DNAJ_2"/>
    <property type="match status" value="1"/>
</dbReference>
<dbReference type="PROSITE" id="PS50005">
    <property type="entry name" value="TPR"/>
    <property type="match status" value="6"/>
</dbReference>
<dbReference type="PROSITE" id="PS50293">
    <property type="entry name" value="TPR_REGION"/>
    <property type="match status" value="2"/>
</dbReference>
<feature type="signal peptide" evidence="2">
    <location>
        <begin position="1"/>
        <end position="21"/>
    </location>
</feature>
<feature type="chain" id="PRO_5010613517" description="Tetratricopeptide repeat and J domain-containing co-chaperone DNJ1">
    <location>
        <begin position="22"/>
        <end position="521"/>
    </location>
</feature>
<feature type="repeat" description="TPR 1" evidence="4">
    <location>
        <begin position="33"/>
        <end position="66"/>
    </location>
</feature>
<feature type="repeat" description="TPR 2" evidence="4">
    <location>
        <begin position="67"/>
        <end position="100"/>
    </location>
</feature>
<feature type="repeat" description="TPR 3" evidence="2">
    <location>
        <begin position="102"/>
        <end position="134"/>
    </location>
</feature>
<feature type="repeat" description="TPR 4" evidence="2 4">
    <location>
        <begin position="176"/>
        <end position="209"/>
    </location>
</feature>
<feature type="repeat" description="TPR 5" evidence="2 4">
    <location>
        <begin position="211"/>
        <end position="244"/>
    </location>
</feature>
<feature type="repeat" description="TPR 6" evidence="2 4">
    <location>
        <begin position="315"/>
        <end position="348"/>
    </location>
</feature>
<feature type="repeat" description="TPR 7" evidence="2 4">
    <location>
        <begin position="349"/>
        <end position="382"/>
    </location>
</feature>
<feature type="domain" description="J" evidence="3">
    <location>
        <begin position="404"/>
        <end position="473"/>
    </location>
</feature>
<feature type="region of interest" description="Disordered" evidence="5">
    <location>
        <begin position="464"/>
        <end position="521"/>
    </location>
</feature>
<feature type="compositionally biased region" description="Basic and acidic residues" evidence="5">
    <location>
        <begin position="464"/>
        <end position="474"/>
    </location>
</feature>
<feature type="compositionally biased region" description="Gly residues" evidence="5">
    <location>
        <begin position="489"/>
        <end position="508"/>
    </location>
</feature>
<feature type="compositionally biased region" description="Low complexity" evidence="5">
    <location>
        <begin position="509"/>
        <end position="521"/>
    </location>
</feature>
<organism>
    <name type="scientific">Fusarium oxysporum f. sp. lycopersici (strain 4287 / CBS 123668 / FGSC 9935 / NRRL 34936)</name>
    <name type="common">Fusarium vascular wilt of tomato</name>
    <dbReference type="NCBI Taxonomy" id="426428"/>
    <lineage>
        <taxon>Eukaryota</taxon>
        <taxon>Fungi</taxon>
        <taxon>Dikarya</taxon>
        <taxon>Ascomycota</taxon>
        <taxon>Pezizomycotina</taxon>
        <taxon>Sordariomycetes</taxon>
        <taxon>Hypocreomycetidae</taxon>
        <taxon>Hypocreales</taxon>
        <taxon>Nectriaceae</taxon>
        <taxon>Fusarium</taxon>
        <taxon>Fusarium oxysporum species complex</taxon>
    </lineage>
</organism>